<geneLocation type="chloroplast"/>
<keyword id="KW-0004">4Fe-4S</keyword>
<keyword id="KW-0067">ATP-binding</keyword>
<keyword id="KW-0149">Chlorophyll biosynthesis</keyword>
<keyword id="KW-0150">Chloroplast</keyword>
<keyword id="KW-0408">Iron</keyword>
<keyword id="KW-0411">Iron-sulfur</keyword>
<keyword id="KW-0479">Metal-binding</keyword>
<keyword id="KW-0547">Nucleotide-binding</keyword>
<keyword id="KW-0560">Oxidoreductase</keyword>
<keyword id="KW-0602">Photosynthesis</keyword>
<keyword id="KW-0934">Plastid</keyword>
<protein>
    <recommendedName>
        <fullName evidence="1">Light-independent protochlorophyllide reductase subunit N</fullName>
        <shortName evidence="1">DPOR subunit N</shortName>
        <shortName evidence="1">LI-POR subunit N</shortName>
        <ecNumber evidence="1">1.3.7.7</ecNumber>
    </recommendedName>
</protein>
<comment type="function">
    <text evidence="1">Component of the dark-operative protochlorophyllide reductase (DPOR) that uses Mg-ATP and reduced ferredoxin to reduce ring D of protochlorophyllide (Pchlide) to form chlorophyllide a (Chlide). This reaction is light-independent. The NB-protein (ChlN-ChlB) is the catalytic component of the complex.</text>
</comment>
<comment type="catalytic activity">
    <reaction evidence="1">
        <text>chlorophyllide a + oxidized 2[4Fe-4S]-[ferredoxin] + 2 ADP + 2 phosphate = protochlorophyllide a + reduced 2[4Fe-4S]-[ferredoxin] + 2 ATP + 2 H2O</text>
        <dbReference type="Rhea" id="RHEA:28202"/>
        <dbReference type="Rhea" id="RHEA-COMP:10002"/>
        <dbReference type="Rhea" id="RHEA-COMP:10004"/>
        <dbReference type="ChEBI" id="CHEBI:15377"/>
        <dbReference type="ChEBI" id="CHEBI:30616"/>
        <dbReference type="ChEBI" id="CHEBI:33722"/>
        <dbReference type="ChEBI" id="CHEBI:33723"/>
        <dbReference type="ChEBI" id="CHEBI:43474"/>
        <dbReference type="ChEBI" id="CHEBI:83348"/>
        <dbReference type="ChEBI" id="CHEBI:83350"/>
        <dbReference type="ChEBI" id="CHEBI:456216"/>
        <dbReference type="EC" id="1.3.7.7"/>
    </reaction>
</comment>
<comment type="cofactor">
    <cofactor evidence="1">
        <name>[4Fe-4S] cluster</name>
        <dbReference type="ChEBI" id="CHEBI:49883"/>
    </cofactor>
    <text evidence="1">Binds 1 [4Fe-4S] cluster per heterodimer. The cluster is bound at the heterodimer interface by residues from both subunits.</text>
</comment>
<comment type="pathway">
    <text evidence="1">Porphyrin-containing compound metabolism; chlorophyll biosynthesis (light-independent).</text>
</comment>
<comment type="subunit">
    <text evidence="1">Protochlorophyllide reductase is composed of three subunits; ChlL, ChlN and ChlB. Forms a heterotetramer of two ChlB and two ChlN subunits.</text>
</comment>
<comment type="subcellular location">
    <subcellularLocation>
        <location>Plastid</location>
        <location>Chloroplast</location>
    </subcellularLocation>
</comment>
<comment type="similarity">
    <text evidence="1">Belongs to the BchN/ChlN family.</text>
</comment>
<sequence>MSTKIVETITLECETGNYHSFCPISCVSWLYQKIEDSFFLVVGTKTCGYFLQNALGVMIFAEPRYAMAELEEGDISAHLNDYEELKTLCIRIRKDRDPSVIIWIGTCTTEIIKMDLEGMAPKLEYEIGVPILVARANGLDYAFTQGEDTVLAVMAHRCPDQELPIGESKETKTKLFPFPLLKEKNLVEYANHPPLVIFGSLPSNLVSQLDTELRRQFIKVSGWLPAQRYADLPSLGDGVYVCGVNPFLSRTATTLIRRKKCELIVAPFPIGPDGTRAWIERICPVFGIEAQSLEEREERIWESLKDYLDLVRGKSVFFMGDNLIEISIARFLIRCGMIVYEIGIPYMDKRYQAAELALLQNTCIRMCMPIPRIVEKPDNSNQIRRMRELQPDLAITGMAHANPLGARGIGTKWSVEFTFAQIHGFANARDVLELVTRPLRRNENLDNLDRTTLVRKNNELYTSTPVK</sequence>
<name>CHLN_PINTH</name>
<organism>
    <name type="scientific">Pinus thunbergii</name>
    <name type="common">Japanese black pine</name>
    <name type="synonym">Pinus thunbergiana</name>
    <dbReference type="NCBI Taxonomy" id="3350"/>
    <lineage>
        <taxon>Eukaryota</taxon>
        <taxon>Viridiplantae</taxon>
        <taxon>Streptophyta</taxon>
        <taxon>Embryophyta</taxon>
        <taxon>Tracheophyta</taxon>
        <taxon>Spermatophyta</taxon>
        <taxon>Pinopsida</taxon>
        <taxon>Pinidae</taxon>
        <taxon>Conifers I</taxon>
        <taxon>Pinales</taxon>
        <taxon>Pinaceae</taxon>
        <taxon>Pinus</taxon>
        <taxon>Pinus subgen. Pinus</taxon>
    </lineage>
</organism>
<accession>P41646</accession>
<gene>
    <name evidence="1" type="primary">chlN</name>
</gene>
<proteinExistence type="inferred from homology"/>
<evidence type="ECO:0000255" key="1">
    <source>
        <dbReference type="HAMAP-Rule" id="MF_00352"/>
    </source>
</evidence>
<dbReference type="EC" id="1.3.7.7" evidence="1"/>
<dbReference type="EMBL" id="D17510">
    <property type="protein sequence ID" value="BAA04441.1"/>
    <property type="molecule type" value="Genomic_DNA"/>
</dbReference>
<dbReference type="PIR" id="T07565">
    <property type="entry name" value="T07565"/>
</dbReference>
<dbReference type="RefSeq" id="NP_042486.1">
    <property type="nucleotide sequence ID" value="NC_001631.1"/>
</dbReference>
<dbReference type="SMR" id="P41646"/>
<dbReference type="GeneID" id="809019"/>
<dbReference type="UniPathway" id="UPA00670"/>
<dbReference type="GO" id="GO:0009507">
    <property type="term" value="C:chloroplast"/>
    <property type="evidence" value="ECO:0007669"/>
    <property type="project" value="UniProtKB-SubCell"/>
</dbReference>
<dbReference type="GO" id="GO:0051539">
    <property type="term" value="F:4 iron, 4 sulfur cluster binding"/>
    <property type="evidence" value="ECO:0007669"/>
    <property type="project" value="UniProtKB-UniRule"/>
</dbReference>
<dbReference type="GO" id="GO:0005524">
    <property type="term" value="F:ATP binding"/>
    <property type="evidence" value="ECO:0007669"/>
    <property type="project" value="UniProtKB-UniRule"/>
</dbReference>
<dbReference type="GO" id="GO:0046872">
    <property type="term" value="F:metal ion binding"/>
    <property type="evidence" value="ECO:0007669"/>
    <property type="project" value="UniProtKB-KW"/>
</dbReference>
<dbReference type="GO" id="GO:0016730">
    <property type="term" value="F:oxidoreductase activity, acting on iron-sulfur proteins as donors"/>
    <property type="evidence" value="ECO:0007669"/>
    <property type="project" value="InterPro"/>
</dbReference>
<dbReference type="GO" id="GO:0016636">
    <property type="term" value="F:oxidoreductase activity, acting on the CH-CH group of donors, iron-sulfur protein as acceptor"/>
    <property type="evidence" value="ECO:0007669"/>
    <property type="project" value="UniProtKB-UniRule"/>
</dbReference>
<dbReference type="GO" id="GO:0036068">
    <property type="term" value="P:light-independent chlorophyll biosynthetic process"/>
    <property type="evidence" value="ECO:0007669"/>
    <property type="project" value="UniProtKB-UniRule"/>
</dbReference>
<dbReference type="GO" id="GO:0019685">
    <property type="term" value="P:photosynthesis, dark reaction"/>
    <property type="evidence" value="ECO:0007669"/>
    <property type="project" value="InterPro"/>
</dbReference>
<dbReference type="CDD" id="cd01979">
    <property type="entry name" value="Pchlide_reductase_N"/>
    <property type="match status" value="1"/>
</dbReference>
<dbReference type="Gene3D" id="3.40.50.1980">
    <property type="entry name" value="Nitrogenase molybdenum iron protein domain"/>
    <property type="match status" value="3"/>
</dbReference>
<dbReference type="HAMAP" id="MF_00352">
    <property type="entry name" value="ChlN_BchN"/>
    <property type="match status" value="1"/>
</dbReference>
<dbReference type="InterPro" id="IPR050293">
    <property type="entry name" value="LIPOR_BchN/ChlN"/>
</dbReference>
<dbReference type="InterPro" id="IPR000510">
    <property type="entry name" value="Nase/OxRdtase_comp1"/>
</dbReference>
<dbReference type="InterPro" id="IPR005970">
    <property type="entry name" value="Protochl_reductN"/>
</dbReference>
<dbReference type="NCBIfam" id="TIGR01279">
    <property type="entry name" value="DPOR_bchN"/>
    <property type="match status" value="1"/>
</dbReference>
<dbReference type="NCBIfam" id="NF002768">
    <property type="entry name" value="PRK02842.1"/>
    <property type="match status" value="1"/>
</dbReference>
<dbReference type="PANTHER" id="PTHR39429">
    <property type="entry name" value="LIGHT-INDEPENDENT PROTOCHLOROPHYLLIDE REDUCTASE SUBUNIT N"/>
    <property type="match status" value="1"/>
</dbReference>
<dbReference type="PANTHER" id="PTHR39429:SF3">
    <property type="entry name" value="LIGHT-INDEPENDENT PROTOCHLOROPHYLLIDE REDUCTASE SUBUNIT N"/>
    <property type="match status" value="1"/>
</dbReference>
<dbReference type="Pfam" id="PF00148">
    <property type="entry name" value="Oxidored_nitro"/>
    <property type="match status" value="1"/>
</dbReference>
<dbReference type="PIRSF" id="PIRSF000162">
    <property type="entry name" value="P_chlorophyll_rd"/>
    <property type="match status" value="1"/>
</dbReference>
<dbReference type="SUPFAM" id="SSF53807">
    <property type="entry name" value="Helical backbone' metal receptor"/>
    <property type="match status" value="1"/>
</dbReference>
<feature type="chain" id="PRO_0000208620" description="Light-independent protochlorophyllide reductase subunit N">
    <location>
        <begin position="1"/>
        <end position="467"/>
    </location>
</feature>
<feature type="binding site" evidence="1">
    <location>
        <position position="22"/>
    </location>
    <ligand>
        <name>[4Fe-4S] cluster</name>
        <dbReference type="ChEBI" id="CHEBI:49883"/>
        <note>ligand shared with heterodimeric partner</note>
    </ligand>
</feature>
<feature type="binding site" evidence="1">
    <location>
        <position position="47"/>
    </location>
    <ligand>
        <name>[4Fe-4S] cluster</name>
        <dbReference type="ChEBI" id="CHEBI:49883"/>
        <note>ligand shared with heterodimeric partner</note>
    </ligand>
</feature>
<feature type="binding site" evidence="1">
    <location>
        <position position="107"/>
    </location>
    <ligand>
        <name>[4Fe-4S] cluster</name>
        <dbReference type="ChEBI" id="CHEBI:49883"/>
        <note>ligand shared with heterodimeric partner</note>
    </ligand>
</feature>
<reference key="1">
    <citation type="journal article" date="1994" name="Proc. Natl. Acad. Sci. U.S.A.">
        <title>Loss of all ndh genes as determined by sequencing the entire chloroplast genome of the black pine Pinus thunbergii.</title>
        <authorList>
            <person name="Wakasugi T."/>
            <person name="Tsudzuki J."/>
            <person name="Ito S."/>
            <person name="Nakashima K."/>
            <person name="Tsudzuki T."/>
            <person name="Sugiura M."/>
        </authorList>
    </citation>
    <scope>NUCLEOTIDE SEQUENCE [LARGE SCALE GENOMIC DNA]</scope>
</reference>